<organism>
    <name type="scientific">Canis lupus familiaris</name>
    <name type="common">Dog</name>
    <name type="synonym">Canis familiaris</name>
    <dbReference type="NCBI Taxonomy" id="9615"/>
    <lineage>
        <taxon>Eukaryota</taxon>
        <taxon>Metazoa</taxon>
        <taxon>Chordata</taxon>
        <taxon>Craniata</taxon>
        <taxon>Vertebrata</taxon>
        <taxon>Euteleostomi</taxon>
        <taxon>Mammalia</taxon>
        <taxon>Eutheria</taxon>
        <taxon>Laurasiatheria</taxon>
        <taxon>Carnivora</taxon>
        <taxon>Caniformia</taxon>
        <taxon>Canidae</taxon>
        <taxon>Canis</taxon>
    </lineage>
</organism>
<accession>Q8WMD0</accession>
<accession>O97832</accession>
<reference key="1">
    <citation type="journal article" date="2002" name="Hum. Mol. Genet.">
        <title>Identification of a new copper metabolism gene by positional cloning in a purebred dog population.</title>
        <authorList>
            <person name="van De Sluis B.A.J."/>
            <person name="Rothuizen J."/>
            <person name="Pearson P.L."/>
            <person name="van Oost B.A."/>
            <person name="Wijmenga C."/>
        </authorList>
    </citation>
    <scope>NUCLEOTIDE SEQUENCE [GENOMIC DNA / MRNA]</scope>
    <scope>DISEASE</scope>
    <source>
        <strain>Beagle</strain>
        <tissue>Liver</tissue>
    </source>
</reference>
<reference key="2">
    <citation type="journal article" date="1999" name="Hum. Mol. Genet.">
        <title>Genetic mapping of the copper toxicosis locus in Bedlington terriers to dog chromosome 10, in a region syntenic to human chromosome region 2p13-p16.</title>
        <authorList>
            <person name="van de Sluis B.A.J."/>
            <person name="Breen M."/>
            <person name="Nanji M."/>
            <person name="van Wolferen M."/>
            <person name="de Jong P."/>
            <person name="Binns M.M."/>
            <person name="Pearson P.L."/>
            <person name="Kuipers J."/>
            <person name="Rothuizen J."/>
            <person name="Cox D.W."/>
            <person name="Wijmenga C."/>
            <person name="van Oost B.A."/>
        </authorList>
    </citation>
    <scope>NUCLEOTIDE SEQUENCE [GENOMIC DNA] OF 60-124</scope>
</reference>
<sequence length="188" mass="20916">MAAELEGSKALGGLLSGLAQEAFHGHHGITEELLRSQLYPEVSLEEFRPFLAKMRGILKSIASADMDFNQLEAFLTAQTKKQGGITSDQAAVISKFWKNHKTKIRESLMNQSRWDSGLRGLSWRVDGKSQSRHSAQIHTPVAIMELEIGKSGQESEFLCLEFDEVKVSQLLKKLSEVEESISTLMQPA</sequence>
<keyword id="KW-0186">Copper</keyword>
<keyword id="KW-0963">Cytoplasm</keyword>
<keyword id="KW-0968">Cytoplasmic vesicle</keyword>
<keyword id="KW-0967">Endosome</keyword>
<keyword id="KW-0472">Membrane</keyword>
<keyword id="KW-0479">Metal-binding</keyword>
<keyword id="KW-0539">Nucleus</keyword>
<keyword id="KW-0653">Protein transport</keyword>
<keyword id="KW-1185">Reference proteome</keyword>
<keyword id="KW-0804">Transcription</keyword>
<keyword id="KW-0805">Transcription regulation</keyword>
<keyword id="KW-0813">Transport</keyword>
<keyword id="KW-0832">Ubl conjugation</keyword>
<keyword id="KW-0833">Ubl conjugation pathway</keyword>
<gene>
    <name type="primary">COMMD1</name>
    <name type="synonym">MURR1</name>
</gene>
<feature type="chain" id="PRO_0000077383" description="COMM domain-containing protein 1">
    <location>
        <begin position="1"/>
        <end position="188"/>
    </location>
</feature>
<feature type="domain" description="COMM" evidence="3">
    <location>
        <begin position="117"/>
        <end position="185"/>
    </location>
</feature>
<feature type="region of interest" description="Sufficient for interaction with SLC12A2" evidence="1">
    <location>
        <begin position="1"/>
        <end position="122"/>
    </location>
</feature>
<feature type="region of interest" description="Required for binding to PtdIns(4,5)P2" evidence="1">
    <location>
        <begin position="124"/>
        <end position="188"/>
    </location>
</feature>
<feature type="binding site" evidence="2">
    <location>
        <position position="100"/>
    </location>
    <ligand>
        <name>Cu cation</name>
        <dbReference type="ChEBI" id="CHEBI:23378"/>
    </ligand>
</feature>
<feature type="binding site" evidence="2">
    <location>
        <position position="109"/>
    </location>
    <ligand>
        <name>Cu cation</name>
        <dbReference type="ChEBI" id="CHEBI:23378"/>
    </ligand>
</feature>
<feature type="binding site" evidence="2">
    <location>
        <position position="133"/>
    </location>
    <ligand>
        <name>Cu cation</name>
        <dbReference type="ChEBI" id="CHEBI:23378"/>
    </ligand>
</feature>
<proteinExistence type="evidence at transcript level"/>
<dbReference type="EMBL" id="AY047597">
    <property type="protein sequence ID" value="AAK98638.1"/>
    <property type="molecule type" value="mRNA"/>
</dbReference>
<dbReference type="EMBL" id="AY047600">
    <property type="protein sequence ID" value="AAK98639.1"/>
    <property type="molecule type" value="Genomic_DNA"/>
</dbReference>
<dbReference type="EMBL" id="AY047598">
    <property type="protein sequence ID" value="AAK98639.1"/>
    <property type="status" value="JOINED"/>
    <property type="molecule type" value="Genomic_DNA"/>
</dbReference>
<dbReference type="EMBL" id="AY047599">
    <property type="protein sequence ID" value="AAK98639.1"/>
    <property type="status" value="JOINED"/>
    <property type="molecule type" value="Genomic_DNA"/>
</dbReference>
<dbReference type="EMBL" id="AF113322">
    <property type="protein sequence ID" value="AAD04948.1"/>
    <property type="molecule type" value="Genomic_DNA"/>
</dbReference>
<dbReference type="RefSeq" id="NP_001003055.1">
    <property type="nucleotide sequence ID" value="NM_001003055.1"/>
</dbReference>
<dbReference type="SMR" id="Q8WMD0"/>
<dbReference type="FunCoup" id="Q8WMD0">
    <property type="interactions" value="278"/>
</dbReference>
<dbReference type="STRING" id="9615.ENSCAFP00000004595"/>
<dbReference type="PaxDb" id="9612-ENSCAFP00000004595"/>
<dbReference type="GeneID" id="403590"/>
<dbReference type="KEGG" id="cfa:403590"/>
<dbReference type="CTD" id="150684"/>
<dbReference type="eggNOG" id="ENOG502RXN6">
    <property type="taxonomic scope" value="Eukaryota"/>
</dbReference>
<dbReference type="InParanoid" id="Q8WMD0"/>
<dbReference type="OrthoDB" id="10251426at2759"/>
<dbReference type="Proteomes" id="UP000002254">
    <property type="component" value="Unplaced"/>
</dbReference>
<dbReference type="Proteomes" id="UP000694429">
    <property type="component" value="Unplaced"/>
</dbReference>
<dbReference type="Proteomes" id="UP000694542">
    <property type="component" value="Unplaced"/>
</dbReference>
<dbReference type="Proteomes" id="UP000805418">
    <property type="component" value="Unplaced"/>
</dbReference>
<dbReference type="GO" id="GO:0031462">
    <property type="term" value="C:Cul2-RING ubiquitin ligase complex"/>
    <property type="evidence" value="ECO:0000250"/>
    <property type="project" value="UniProtKB"/>
</dbReference>
<dbReference type="GO" id="GO:0005737">
    <property type="term" value="C:cytoplasm"/>
    <property type="evidence" value="ECO:0000250"/>
    <property type="project" value="UniProtKB"/>
</dbReference>
<dbReference type="GO" id="GO:0005769">
    <property type="term" value="C:early endosome"/>
    <property type="evidence" value="ECO:0007669"/>
    <property type="project" value="UniProtKB-SubCell"/>
</dbReference>
<dbReference type="GO" id="GO:0005768">
    <property type="term" value="C:endosome"/>
    <property type="evidence" value="ECO:0000318"/>
    <property type="project" value="GO_Central"/>
</dbReference>
<dbReference type="GO" id="GO:0010008">
    <property type="term" value="C:endosome membrane"/>
    <property type="evidence" value="ECO:0007669"/>
    <property type="project" value="UniProtKB-SubCell"/>
</dbReference>
<dbReference type="GO" id="GO:0005634">
    <property type="term" value="C:nucleus"/>
    <property type="evidence" value="ECO:0000250"/>
    <property type="project" value="UniProtKB"/>
</dbReference>
<dbReference type="GO" id="GO:0055037">
    <property type="term" value="C:recycling endosome"/>
    <property type="evidence" value="ECO:0007669"/>
    <property type="project" value="UniProtKB-SubCell"/>
</dbReference>
<dbReference type="GO" id="GO:0005507">
    <property type="term" value="F:copper ion binding"/>
    <property type="evidence" value="ECO:0000250"/>
    <property type="project" value="UniProtKB"/>
</dbReference>
<dbReference type="GO" id="GO:0055070">
    <property type="term" value="P:copper ion homeostasis"/>
    <property type="evidence" value="ECO:0000250"/>
    <property type="project" value="UniProtKB"/>
</dbReference>
<dbReference type="GO" id="GO:0032088">
    <property type="term" value="P:negative regulation of NF-kappaB transcription factor activity"/>
    <property type="evidence" value="ECO:0000250"/>
    <property type="project" value="UniProtKB"/>
</dbReference>
<dbReference type="GO" id="GO:2000009">
    <property type="term" value="P:negative regulation of protein localization to cell surface"/>
    <property type="evidence" value="ECO:0000318"/>
    <property type="project" value="GO_Central"/>
</dbReference>
<dbReference type="GO" id="GO:1902306">
    <property type="term" value="P:negative regulation of sodium ion transmembrane transport"/>
    <property type="evidence" value="ECO:0000318"/>
    <property type="project" value="GO_Central"/>
</dbReference>
<dbReference type="GO" id="GO:0031398">
    <property type="term" value="P:positive regulation of protein ubiquitination"/>
    <property type="evidence" value="ECO:0000250"/>
    <property type="project" value="UniProtKB"/>
</dbReference>
<dbReference type="GO" id="GO:0015031">
    <property type="term" value="P:protein transport"/>
    <property type="evidence" value="ECO:0007669"/>
    <property type="project" value="UniProtKB-KW"/>
</dbReference>
<dbReference type="GO" id="GO:0032434">
    <property type="term" value="P:regulation of proteasomal ubiquitin-dependent protein catabolic process"/>
    <property type="evidence" value="ECO:0000250"/>
    <property type="project" value="UniProtKB"/>
</dbReference>
<dbReference type="CDD" id="cd04749">
    <property type="entry name" value="Commd1_MURR1"/>
    <property type="match status" value="1"/>
</dbReference>
<dbReference type="InterPro" id="IPR017920">
    <property type="entry name" value="COMM"/>
</dbReference>
<dbReference type="InterPro" id="IPR033776">
    <property type="entry name" value="COMMD1_N"/>
</dbReference>
<dbReference type="InterPro" id="IPR037351">
    <property type="entry name" value="Murr1"/>
</dbReference>
<dbReference type="PANTHER" id="PTHR21199">
    <property type="entry name" value="COMM DOMAIN-CONTAINING PROTEIN 1"/>
    <property type="match status" value="1"/>
</dbReference>
<dbReference type="PANTHER" id="PTHR21199:SF1">
    <property type="entry name" value="COMM DOMAIN-CONTAINING PROTEIN 1"/>
    <property type="match status" value="1"/>
</dbReference>
<dbReference type="Pfam" id="PF07258">
    <property type="entry name" value="COMM_domain"/>
    <property type="match status" value="1"/>
</dbReference>
<dbReference type="Pfam" id="PF17221">
    <property type="entry name" value="COMMD1_N"/>
    <property type="match status" value="1"/>
</dbReference>
<dbReference type="PROSITE" id="PS51269">
    <property type="entry name" value="COMM"/>
    <property type="match status" value="1"/>
</dbReference>
<protein>
    <recommendedName>
        <fullName>COMM domain-containing protein 1</fullName>
    </recommendedName>
    <alternativeName>
        <fullName>Protein Murr1</fullName>
    </alternativeName>
</protein>
<name>COMD1_CANLF</name>
<comment type="function">
    <text evidence="1">Scaffold protein in the commander complex that is essential for endosomal recycling of transmembrane cargos; the commander complex is composed of the CCC subcomplex and the retriever subcomplex (By similarity). Can modulate activity of cullin-RING E3 ubiquitin ligase (CRL) complexes by displacing CAND1; in vitro promotes CRL E3 activity and dissociates CAND1 from CUL1 and CUL2 (By similarity). Promotes ubiquitination of NF-kappa-B subunit RELA and its subsequent proteasomal degradation. Down-regulates NF-kappa-B activity (By similarity). Involved in the regulation of membrane expression and ubiquitination of SLC12A2 (By similarity). Modulates Na(+) transport in epithelial cells by regulation of apical cell surface expression of amiloride-sensitive sodium channel (ENaC) subunits and by promoting their ubiquitination presumably involving NEDD4L. Promotes the localization of SCNN1D to recycling endosomes (By similarity). Promotes CFTR cell surface expression through regulation of its ubiquitination (By similarity). Down-regulates SOD1 activity by interfering with its homodimerization (By similarity). Plays a role in copper ion homeostasis. Involved in copper-dependent ATP7A trafficking between the trans-Golgi network and vesicles in the cell periphery; the function is proposed to depend on its association within the CCC complex and cooperation with the WASH complex on early endosomes (By similarity). Can bind one copper ion per monomer (By similarity). May function to facilitate biliary copper excretion within hepatocytes. Binds to phosphatidylinositol 4,5-bisphosphate (PtdIns(4,5)P2) (By similarity). Involved in the regulation of HIF1A-mediated transcription; competes with ARNT/Hif-1-beta for binding to HIF1A resulting in decreased DNA binding and impaired transcriptional activation by HIF-1 (By similarity). Negatively regulates neuroblastoma G1/S phase cell cycle progression and cell proliferation by stimulating ubiquitination of NF-kappa-B subunit RELA and NF-kappa-B degradation in a FAM107A- and actin-dependent manner (By similarity).</text>
</comment>
<comment type="subunit">
    <text evidence="1">Component of the commander complex consisting of the CCC subcomplex and the retriever subcomplex (By similarity). Component of the CCC (COMMD/CCDC22/CCDC93) subcomplex consisting of COMMD1, COMMD2, COMMD3, COMMD4, COMMD5, COMMD6, COMMD7, COMMD8, COMMD9, COMMD10, CCDC22 and CCDC93; within the complex forms a heterodimer with COMMD6 (By similarity). Interacts with VPS35L; the interaction associates the CCC complex with the retriever complex (By similarity). Identified in a complex with an E3 ubiquitin ligase complex composed of TCEB1/elongin C, CUL2, SOCS1 and RBX1; in the complex interacts directly with SOCS1 and CUL2 (By similarity). Identified in a complex with NF-kappa-B (By similarity). Interacts directly with SLC12A2 (By similarity). Interacts directly with ATP7B (via the N-terminal region) (By similarity). Interacts with ATP7A (By similarity). Interacts with FAM107A; this interaction stabilizes COMMD1 in the nucleus (By similarity). Interacts with CCS, CDKN2A, RELA, REL, RELB, NFKB1/p105, NFKB2/p100, NFKBIB, SCNN1D, SCNN1B, CFTR, CLU, SGK1, AKT1, CUL1, CUL2, CUL3, CUL4A, CUL4B, CUL5, CUL7, HIF1A (By similarity).</text>
</comment>
<comment type="subcellular location">
    <subcellularLocation>
        <location evidence="1">Nucleus</location>
    </subcellularLocation>
    <subcellularLocation>
        <location evidence="1">Cytoplasm</location>
    </subcellularLocation>
    <subcellularLocation>
        <location evidence="1">Endosome membrane</location>
    </subcellularLocation>
    <subcellularLocation>
        <location evidence="1">Cytoplasmic vesicle</location>
    </subcellularLocation>
    <subcellularLocation>
        <location evidence="1">Early endosome</location>
    </subcellularLocation>
    <subcellularLocation>
        <location evidence="1">Recycling endosome</location>
    </subcellularLocation>
    <text evidence="1">Shuttles between nucleus and cytosol. Detected in perinuclear foci that may be aggresomes containing misfolded, ubiquitinated proteins (By similarity).</text>
</comment>
<comment type="PTM">
    <text evidence="1">Ubiquitinated; undergoes both 'Lys-63'- and 'Lys-48'-linked polyubiquitination. Ubiquitinated by XIAP, leading to its proteasomal degradation (By similarity).</text>
</comment>
<comment type="disease">
    <text evidence="4">Defects in COMMD1 are the cause of copper toxicosis (CT) in Bedlington terriers, a genetic disease occurring with a high prevalence worldwide and is unique to this breed. In Bedlington terriers the biliary excretion of copper is impaired.</text>
</comment>
<comment type="similarity">
    <text evidence="5">Belongs to the COMM domain-containing protein 1 family.</text>
</comment>
<evidence type="ECO:0000250" key="1">
    <source>
        <dbReference type="UniProtKB" id="Q8N668"/>
    </source>
</evidence>
<evidence type="ECO:0000255" key="2"/>
<evidence type="ECO:0000255" key="3">
    <source>
        <dbReference type="PROSITE-ProRule" id="PRU00602"/>
    </source>
</evidence>
<evidence type="ECO:0000269" key="4">
    <source>
    </source>
</evidence>
<evidence type="ECO:0000305" key="5"/>